<sequence length="600" mass="67680">MSMRTEYCGLVTEHLLGQTVSLCGWVHRRRDHGGVIFIDLRDREGLVQVVCDPDRAEMFAAAEGVRNEFCIQVKGLVRGRPEGTINAGLKSGRIEVLCHELNVLNASVTPPFQLDDDNLSETTRLTHRVLDLRRPQMQHNLRLRYRVAIEARKYLDEQGFIDIETPMLTKSTPEGARDYLVPSRVNAGQFFALPQSPQLFKQLLMVANFDRYYQITKCFRDEDLRADRQPEFTQIDCETSFLGEQEIRDLFEDMIRHIFKTTIGVELDATFPVMPYSEAMARFGSDKPDLRVKLEFTELTDAMKDVDFKVFSTPANTKDGRVAALRVPKGGELTRGDIDGYTEFVRIYGAKGLAWIKVNERAKGRDGLQSPIVKNLHDASIAAILERTGAQDGDIIFFAADRAKVVNDSLGALRLKIGHSEFGKANGLVEAGWKPLWVVDFPMFEYDDEEARYVAAHHPFTSPKDEHLEYLETDPGRCLAKAYDMVLNGWEIGGGSVRIHREEVQSKVFRALKIGPEEAQAKFGFLLDALQYGAPPHGGIAFGLDRIVTMMAGADSIRDVIAFPKTQRAQCLLTQAPSPVDERQLRELHIRLRQPEQPKA</sequence>
<comment type="function">
    <text evidence="1">Aspartyl-tRNA synthetase with relaxed tRNA specificity since it is able to aspartylate not only its cognate tRNA(Asp) but also tRNA(Asn). Reaction proceeds in two steps: L-aspartate is first activated by ATP to form Asp-AMP and then transferred to the acceptor end of tRNA(Asp/Asn).</text>
</comment>
<comment type="catalytic activity">
    <reaction evidence="1">
        <text>tRNA(Asx) + L-aspartate + ATP = L-aspartyl-tRNA(Asx) + AMP + diphosphate</text>
        <dbReference type="Rhea" id="RHEA:18349"/>
        <dbReference type="Rhea" id="RHEA-COMP:9710"/>
        <dbReference type="Rhea" id="RHEA-COMP:9711"/>
        <dbReference type="ChEBI" id="CHEBI:29991"/>
        <dbReference type="ChEBI" id="CHEBI:30616"/>
        <dbReference type="ChEBI" id="CHEBI:33019"/>
        <dbReference type="ChEBI" id="CHEBI:78442"/>
        <dbReference type="ChEBI" id="CHEBI:78516"/>
        <dbReference type="ChEBI" id="CHEBI:456215"/>
        <dbReference type="EC" id="6.1.1.23"/>
    </reaction>
</comment>
<comment type="subunit">
    <text evidence="1">Homodimer.</text>
</comment>
<comment type="subcellular location">
    <subcellularLocation>
        <location evidence="1">Cytoplasm</location>
    </subcellularLocation>
</comment>
<comment type="similarity">
    <text evidence="1">Belongs to the class-II aminoacyl-tRNA synthetase family. Type 1 subfamily.</text>
</comment>
<reference key="1">
    <citation type="journal article" date="2010" name="Genome Biol. Evol.">
        <title>Continuing evolution of Burkholderia mallei through genome reduction and large-scale rearrangements.</title>
        <authorList>
            <person name="Losada L."/>
            <person name="Ronning C.M."/>
            <person name="DeShazer D."/>
            <person name="Woods D."/>
            <person name="Fedorova N."/>
            <person name="Kim H.S."/>
            <person name="Shabalina S.A."/>
            <person name="Pearson T.R."/>
            <person name="Brinkac L."/>
            <person name="Tan P."/>
            <person name="Nandi T."/>
            <person name="Crabtree J."/>
            <person name="Badger J."/>
            <person name="Beckstrom-Sternberg S."/>
            <person name="Saqib M."/>
            <person name="Schutzer S.E."/>
            <person name="Keim P."/>
            <person name="Nierman W.C."/>
        </authorList>
    </citation>
    <scope>NUCLEOTIDE SEQUENCE [LARGE SCALE GENOMIC DNA]</scope>
    <source>
        <strain>1106a</strain>
    </source>
</reference>
<evidence type="ECO:0000255" key="1">
    <source>
        <dbReference type="HAMAP-Rule" id="MF_00044"/>
    </source>
</evidence>
<feature type="chain" id="PRO_1000006650" description="Aspartate--tRNA(Asp/Asn) ligase">
    <location>
        <begin position="1"/>
        <end position="600"/>
    </location>
</feature>
<feature type="region of interest" description="Aspartate" evidence="1">
    <location>
        <begin position="198"/>
        <end position="201"/>
    </location>
</feature>
<feature type="binding site" evidence="1">
    <location>
        <position position="174"/>
    </location>
    <ligand>
        <name>L-aspartate</name>
        <dbReference type="ChEBI" id="CHEBI:29991"/>
    </ligand>
</feature>
<feature type="binding site" evidence="1">
    <location>
        <begin position="220"/>
        <end position="222"/>
    </location>
    <ligand>
        <name>ATP</name>
        <dbReference type="ChEBI" id="CHEBI:30616"/>
    </ligand>
</feature>
<feature type="binding site" evidence="1">
    <location>
        <position position="220"/>
    </location>
    <ligand>
        <name>L-aspartate</name>
        <dbReference type="ChEBI" id="CHEBI:29991"/>
    </ligand>
</feature>
<feature type="binding site" evidence="1">
    <location>
        <position position="229"/>
    </location>
    <ligand>
        <name>ATP</name>
        <dbReference type="ChEBI" id="CHEBI:30616"/>
    </ligand>
</feature>
<feature type="binding site" evidence="1">
    <location>
        <position position="457"/>
    </location>
    <ligand>
        <name>L-aspartate</name>
        <dbReference type="ChEBI" id="CHEBI:29991"/>
    </ligand>
</feature>
<feature type="binding site" evidence="1">
    <location>
        <position position="491"/>
    </location>
    <ligand>
        <name>ATP</name>
        <dbReference type="ChEBI" id="CHEBI:30616"/>
    </ligand>
</feature>
<feature type="binding site" evidence="1">
    <location>
        <position position="498"/>
    </location>
    <ligand>
        <name>L-aspartate</name>
        <dbReference type="ChEBI" id="CHEBI:29991"/>
    </ligand>
</feature>
<feature type="binding site" evidence="1">
    <location>
        <begin position="543"/>
        <end position="546"/>
    </location>
    <ligand>
        <name>ATP</name>
        <dbReference type="ChEBI" id="CHEBI:30616"/>
    </ligand>
</feature>
<feature type="site" description="Important for tRNA non-discrimination" evidence="1">
    <location>
        <position position="32"/>
    </location>
</feature>
<feature type="site" description="Important for tRNA non-discrimination" evidence="1">
    <location>
        <position position="83"/>
    </location>
</feature>
<protein>
    <recommendedName>
        <fullName evidence="1">Aspartate--tRNA(Asp/Asn) ligase</fullName>
        <ecNumber evidence="1">6.1.1.23</ecNumber>
    </recommendedName>
    <alternativeName>
        <fullName evidence="1">Aspartyl-tRNA synthetase</fullName>
        <shortName evidence="1">AspRS</shortName>
    </alternativeName>
    <alternativeName>
        <fullName evidence="1">Non-discriminating aspartyl-tRNA synthetase</fullName>
        <shortName evidence="1">ND-AspRS</shortName>
    </alternativeName>
</protein>
<proteinExistence type="inferred from homology"/>
<keyword id="KW-0030">Aminoacyl-tRNA synthetase</keyword>
<keyword id="KW-0067">ATP-binding</keyword>
<keyword id="KW-0963">Cytoplasm</keyword>
<keyword id="KW-0436">Ligase</keyword>
<keyword id="KW-0547">Nucleotide-binding</keyword>
<keyword id="KW-0648">Protein biosynthesis</keyword>
<organism>
    <name type="scientific">Burkholderia pseudomallei (strain 1106a)</name>
    <dbReference type="NCBI Taxonomy" id="357348"/>
    <lineage>
        <taxon>Bacteria</taxon>
        <taxon>Pseudomonadati</taxon>
        <taxon>Pseudomonadota</taxon>
        <taxon>Betaproteobacteria</taxon>
        <taxon>Burkholderiales</taxon>
        <taxon>Burkholderiaceae</taxon>
        <taxon>Burkholderia</taxon>
        <taxon>pseudomallei group</taxon>
    </lineage>
</organism>
<dbReference type="EC" id="6.1.1.23" evidence="1"/>
<dbReference type="EMBL" id="CP000572">
    <property type="protein sequence ID" value="ABN89831.1"/>
    <property type="molecule type" value="Genomic_DNA"/>
</dbReference>
<dbReference type="RefSeq" id="WP_004189849.1">
    <property type="nucleotide sequence ID" value="NC_009076.1"/>
</dbReference>
<dbReference type="SMR" id="A3NRK2"/>
<dbReference type="GeneID" id="93059156"/>
<dbReference type="KEGG" id="bpl:BURPS1106A_0691"/>
<dbReference type="HOGENOM" id="CLU_014330_3_2_4"/>
<dbReference type="Proteomes" id="UP000006738">
    <property type="component" value="Chromosome I"/>
</dbReference>
<dbReference type="GO" id="GO:0005737">
    <property type="term" value="C:cytoplasm"/>
    <property type="evidence" value="ECO:0007669"/>
    <property type="project" value="UniProtKB-SubCell"/>
</dbReference>
<dbReference type="GO" id="GO:0004815">
    <property type="term" value="F:aspartate-tRNA ligase activity"/>
    <property type="evidence" value="ECO:0007669"/>
    <property type="project" value="UniProtKB-UniRule"/>
</dbReference>
<dbReference type="GO" id="GO:0050560">
    <property type="term" value="F:aspartate-tRNA(Asn) ligase activity"/>
    <property type="evidence" value="ECO:0007669"/>
    <property type="project" value="UniProtKB-EC"/>
</dbReference>
<dbReference type="GO" id="GO:0005524">
    <property type="term" value="F:ATP binding"/>
    <property type="evidence" value="ECO:0007669"/>
    <property type="project" value="UniProtKB-UniRule"/>
</dbReference>
<dbReference type="GO" id="GO:0003676">
    <property type="term" value="F:nucleic acid binding"/>
    <property type="evidence" value="ECO:0007669"/>
    <property type="project" value="InterPro"/>
</dbReference>
<dbReference type="GO" id="GO:0006422">
    <property type="term" value="P:aspartyl-tRNA aminoacylation"/>
    <property type="evidence" value="ECO:0007669"/>
    <property type="project" value="UniProtKB-UniRule"/>
</dbReference>
<dbReference type="CDD" id="cd00777">
    <property type="entry name" value="AspRS_core"/>
    <property type="match status" value="1"/>
</dbReference>
<dbReference type="CDD" id="cd04317">
    <property type="entry name" value="EcAspRS_like_N"/>
    <property type="match status" value="1"/>
</dbReference>
<dbReference type="Gene3D" id="3.30.930.10">
    <property type="entry name" value="Bira Bifunctional Protein, Domain 2"/>
    <property type="match status" value="1"/>
</dbReference>
<dbReference type="Gene3D" id="3.30.1360.30">
    <property type="entry name" value="GAD-like domain"/>
    <property type="match status" value="1"/>
</dbReference>
<dbReference type="Gene3D" id="2.40.50.140">
    <property type="entry name" value="Nucleic acid-binding proteins"/>
    <property type="match status" value="1"/>
</dbReference>
<dbReference type="HAMAP" id="MF_00044">
    <property type="entry name" value="Asp_tRNA_synth_type1"/>
    <property type="match status" value="1"/>
</dbReference>
<dbReference type="InterPro" id="IPR004364">
    <property type="entry name" value="Aa-tRNA-synt_II"/>
</dbReference>
<dbReference type="InterPro" id="IPR006195">
    <property type="entry name" value="aa-tRNA-synth_II"/>
</dbReference>
<dbReference type="InterPro" id="IPR045864">
    <property type="entry name" value="aa-tRNA-synth_II/BPL/LPL"/>
</dbReference>
<dbReference type="InterPro" id="IPR004524">
    <property type="entry name" value="Asp-tRNA-ligase_1"/>
</dbReference>
<dbReference type="InterPro" id="IPR047089">
    <property type="entry name" value="Asp-tRNA-ligase_1_N"/>
</dbReference>
<dbReference type="InterPro" id="IPR002312">
    <property type="entry name" value="Asp/Asn-tRNA-synth_IIb"/>
</dbReference>
<dbReference type="InterPro" id="IPR047090">
    <property type="entry name" value="AspRS_core"/>
</dbReference>
<dbReference type="InterPro" id="IPR004115">
    <property type="entry name" value="GAD-like_sf"/>
</dbReference>
<dbReference type="InterPro" id="IPR029351">
    <property type="entry name" value="GAD_dom"/>
</dbReference>
<dbReference type="InterPro" id="IPR012340">
    <property type="entry name" value="NA-bd_OB-fold"/>
</dbReference>
<dbReference type="InterPro" id="IPR004365">
    <property type="entry name" value="NA-bd_OB_tRNA"/>
</dbReference>
<dbReference type="NCBIfam" id="TIGR00459">
    <property type="entry name" value="aspS_bact"/>
    <property type="match status" value="1"/>
</dbReference>
<dbReference type="NCBIfam" id="NF001750">
    <property type="entry name" value="PRK00476.1"/>
    <property type="match status" value="1"/>
</dbReference>
<dbReference type="PANTHER" id="PTHR22594:SF5">
    <property type="entry name" value="ASPARTATE--TRNA LIGASE, MITOCHONDRIAL"/>
    <property type="match status" value="1"/>
</dbReference>
<dbReference type="PANTHER" id="PTHR22594">
    <property type="entry name" value="ASPARTYL/LYSYL-TRNA SYNTHETASE"/>
    <property type="match status" value="1"/>
</dbReference>
<dbReference type="Pfam" id="PF02938">
    <property type="entry name" value="GAD"/>
    <property type="match status" value="1"/>
</dbReference>
<dbReference type="Pfam" id="PF00152">
    <property type="entry name" value="tRNA-synt_2"/>
    <property type="match status" value="1"/>
</dbReference>
<dbReference type="Pfam" id="PF01336">
    <property type="entry name" value="tRNA_anti-codon"/>
    <property type="match status" value="1"/>
</dbReference>
<dbReference type="PRINTS" id="PR01042">
    <property type="entry name" value="TRNASYNTHASP"/>
</dbReference>
<dbReference type="SUPFAM" id="SSF55681">
    <property type="entry name" value="Class II aaRS and biotin synthetases"/>
    <property type="match status" value="1"/>
</dbReference>
<dbReference type="SUPFAM" id="SSF55261">
    <property type="entry name" value="GAD domain-like"/>
    <property type="match status" value="1"/>
</dbReference>
<dbReference type="SUPFAM" id="SSF50249">
    <property type="entry name" value="Nucleic acid-binding proteins"/>
    <property type="match status" value="1"/>
</dbReference>
<dbReference type="PROSITE" id="PS50862">
    <property type="entry name" value="AA_TRNA_LIGASE_II"/>
    <property type="match status" value="1"/>
</dbReference>
<name>SYDND_BURP0</name>
<accession>A3NRK2</accession>
<gene>
    <name evidence="1" type="primary">aspS</name>
    <name type="ordered locus">BURPS1106A_0691</name>
</gene>